<gene>
    <name evidence="1" type="primary">miaA2</name>
    <name type="ordered locus">Gura_1771</name>
</gene>
<reference key="1">
    <citation type="submission" date="2007-05" db="EMBL/GenBank/DDBJ databases">
        <title>Complete sequence of Geobacter uraniireducens Rf4.</title>
        <authorList>
            <consortium name="US DOE Joint Genome Institute"/>
            <person name="Copeland A."/>
            <person name="Lucas S."/>
            <person name="Lapidus A."/>
            <person name="Barry K."/>
            <person name="Detter J.C."/>
            <person name="Glavina del Rio T."/>
            <person name="Hammon N."/>
            <person name="Israni S."/>
            <person name="Dalin E."/>
            <person name="Tice H."/>
            <person name="Pitluck S."/>
            <person name="Chertkov O."/>
            <person name="Brettin T."/>
            <person name="Bruce D."/>
            <person name="Han C."/>
            <person name="Schmutz J."/>
            <person name="Larimer F."/>
            <person name="Land M."/>
            <person name="Hauser L."/>
            <person name="Kyrpides N."/>
            <person name="Mikhailova N."/>
            <person name="Shelobolina E."/>
            <person name="Aklujkar M."/>
            <person name="Lovley D."/>
            <person name="Richardson P."/>
        </authorList>
    </citation>
    <scope>NUCLEOTIDE SEQUENCE [LARGE SCALE GENOMIC DNA]</scope>
    <source>
        <strain>ATCC BAA-1134 / JCM 13001 / Rf4</strain>
    </source>
</reference>
<sequence length="310" mass="35172">MVDGEDKIKLIIIVGPTASGKTELAVRLAERFDGEIVNADSMQVYRGMDIGTAKPSPQLRQRVPHHLVDIVTPDVNFSAADFRREAAAAIDDIHSRGKSVFVVGGTGLYIRALLQGLVDSPSGDESIRRELVELAQTVGNEELLRRLALVDPETAERLHPNDRLRIIRALEVYRQTGRPISTFRSEHGFADTYYDCLKIGLRVERQELYRRVESRVEVMIEQGLIAEVEGLLRAGYTPDLKSMRSIGYKEICAYLAGECTLDEAVQLIKRDTRHYAKRQMTWFNKDFEINWVEYPESFATICNHVIEFFA</sequence>
<organism>
    <name type="scientific">Geotalea uraniireducens (strain Rf4)</name>
    <name type="common">Geobacter uraniireducens</name>
    <dbReference type="NCBI Taxonomy" id="351605"/>
    <lineage>
        <taxon>Bacteria</taxon>
        <taxon>Pseudomonadati</taxon>
        <taxon>Thermodesulfobacteriota</taxon>
        <taxon>Desulfuromonadia</taxon>
        <taxon>Geobacterales</taxon>
        <taxon>Geobacteraceae</taxon>
        <taxon>Geotalea</taxon>
    </lineage>
</organism>
<feature type="chain" id="PRO_0000377175" description="tRNA dimethylallyltransferase 2">
    <location>
        <begin position="1"/>
        <end position="310"/>
    </location>
</feature>
<feature type="region of interest" description="Interaction with substrate tRNA" evidence="1">
    <location>
        <begin position="40"/>
        <end position="43"/>
    </location>
</feature>
<feature type="binding site" evidence="1">
    <location>
        <begin position="15"/>
        <end position="22"/>
    </location>
    <ligand>
        <name>ATP</name>
        <dbReference type="ChEBI" id="CHEBI:30616"/>
    </ligand>
</feature>
<feature type="binding site" evidence="1">
    <location>
        <begin position="17"/>
        <end position="22"/>
    </location>
    <ligand>
        <name>substrate</name>
    </ligand>
</feature>
<feature type="site" description="Interaction with substrate tRNA" evidence="1">
    <location>
        <position position="106"/>
    </location>
</feature>
<feature type="site" description="Interaction with substrate tRNA" evidence="1">
    <location>
        <position position="128"/>
    </location>
</feature>
<dbReference type="EC" id="2.5.1.75" evidence="1"/>
<dbReference type="EMBL" id="CP000698">
    <property type="protein sequence ID" value="ABQ25961.1"/>
    <property type="molecule type" value="Genomic_DNA"/>
</dbReference>
<dbReference type="RefSeq" id="WP_011938667.1">
    <property type="nucleotide sequence ID" value="NC_009483.1"/>
</dbReference>
<dbReference type="SMR" id="A5GEV6"/>
<dbReference type="STRING" id="351605.Gura_1771"/>
<dbReference type="KEGG" id="gur:Gura_1771"/>
<dbReference type="HOGENOM" id="CLU_032616_0_1_7"/>
<dbReference type="OrthoDB" id="9776390at2"/>
<dbReference type="Proteomes" id="UP000006695">
    <property type="component" value="Chromosome"/>
</dbReference>
<dbReference type="GO" id="GO:0005524">
    <property type="term" value="F:ATP binding"/>
    <property type="evidence" value="ECO:0007669"/>
    <property type="project" value="UniProtKB-UniRule"/>
</dbReference>
<dbReference type="GO" id="GO:0052381">
    <property type="term" value="F:tRNA dimethylallyltransferase activity"/>
    <property type="evidence" value="ECO:0007669"/>
    <property type="project" value="UniProtKB-UniRule"/>
</dbReference>
<dbReference type="GO" id="GO:0006400">
    <property type="term" value="P:tRNA modification"/>
    <property type="evidence" value="ECO:0007669"/>
    <property type="project" value="TreeGrafter"/>
</dbReference>
<dbReference type="FunFam" id="1.10.20.140:FF:000001">
    <property type="entry name" value="tRNA dimethylallyltransferase"/>
    <property type="match status" value="1"/>
</dbReference>
<dbReference type="Gene3D" id="1.10.20.140">
    <property type="match status" value="1"/>
</dbReference>
<dbReference type="Gene3D" id="3.40.50.300">
    <property type="entry name" value="P-loop containing nucleotide triphosphate hydrolases"/>
    <property type="match status" value="1"/>
</dbReference>
<dbReference type="HAMAP" id="MF_00185">
    <property type="entry name" value="IPP_trans"/>
    <property type="match status" value="1"/>
</dbReference>
<dbReference type="InterPro" id="IPR039657">
    <property type="entry name" value="Dimethylallyltransferase"/>
</dbReference>
<dbReference type="InterPro" id="IPR018022">
    <property type="entry name" value="IPT"/>
</dbReference>
<dbReference type="InterPro" id="IPR027417">
    <property type="entry name" value="P-loop_NTPase"/>
</dbReference>
<dbReference type="NCBIfam" id="TIGR00174">
    <property type="entry name" value="miaA"/>
    <property type="match status" value="1"/>
</dbReference>
<dbReference type="PANTHER" id="PTHR11088">
    <property type="entry name" value="TRNA DIMETHYLALLYLTRANSFERASE"/>
    <property type="match status" value="1"/>
</dbReference>
<dbReference type="PANTHER" id="PTHR11088:SF60">
    <property type="entry name" value="TRNA DIMETHYLALLYLTRANSFERASE"/>
    <property type="match status" value="1"/>
</dbReference>
<dbReference type="Pfam" id="PF01715">
    <property type="entry name" value="IPPT"/>
    <property type="match status" value="1"/>
</dbReference>
<dbReference type="SUPFAM" id="SSF52540">
    <property type="entry name" value="P-loop containing nucleoside triphosphate hydrolases"/>
    <property type="match status" value="2"/>
</dbReference>
<proteinExistence type="inferred from homology"/>
<name>MIAA2_GEOUR</name>
<protein>
    <recommendedName>
        <fullName evidence="1">tRNA dimethylallyltransferase 2</fullName>
        <ecNumber evidence="1">2.5.1.75</ecNumber>
    </recommendedName>
    <alternativeName>
        <fullName evidence="1">Dimethylallyl diphosphate:tRNA dimethylallyltransferase 2</fullName>
        <shortName evidence="1">DMAPP:tRNA dimethylallyltransferase 2</shortName>
        <shortName evidence="1">DMATase 2</shortName>
    </alternativeName>
    <alternativeName>
        <fullName evidence="1">Isopentenyl-diphosphate:tRNA isopentenyltransferase 2</fullName>
        <shortName evidence="1">IPP transferase 2</shortName>
        <shortName evidence="1">IPPT 2</shortName>
        <shortName evidence="1">IPTase 2</shortName>
    </alternativeName>
</protein>
<comment type="function">
    <text evidence="1">Catalyzes the transfer of a dimethylallyl group onto the adenine at position 37 in tRNAs that read codons beginning with uridine, leading to the formation of N6-(dimethylallyl)adenosine (i(6)A).</text>
</comment>
<comment type="catalytic activity">
    <reaction evidence="1">
        <text>adenosine(37) in tRNA + dimethylallyl diphosphate = N(6)-dimethylallyladenosine(37) in tRNA + diphosphate</text>
        <dbReference type="Rhea" id="RHEA:26482"/>
        <dbReference type="Rhea" id="RHEA-COMP:10162"/>
        <dbReference type="Rhea" id="RHEA-COMP:10375"/>
        <dbReference type="ChEBI" id="CHEBI:33019"/>
        <dbReference type="ChEBI" id="CHEBI:57623"/>
        <dbReference type="ChEBI" id="CHEBI:74411"/>
        <dbReference type="ChEBI" id="CHEBI:74415"/>
        <dbReference type="EC" id="2.5.1.75"/>
    </reaction>
</comment>
<comment type="cofactor">
    <cofactor evidence="1">
        <name>Mg(2+)</name>
        <dbReference type="ChEBI" id="CHEBI:18420"/>
    </cofactor>
</comment>
<comment type="subunit">
    <text evidence="1">Monomer.</text>
</comment>
<comment type="similarity">
    <text evidence="1">Belongs to the IPP transferase family.</text>
</comment>
<keyword id="KW-0067">ATP-binding</keyword>
<keyword id="KW-0460">Magnesium</keyword>
<keyword id="KW-0547">Nucleotide-binding</keyword>
<keyword id="KW-1185">Reference proteome</keyword>
<keyword id="KW-0808">Transferase</keyword>
<keyword id="KW-0819">tRNA processing</keyword>
<accession>A5GEV6</accession>
<evidence type="ECO:0000255" key="1">
    <source>
        <dbReference type="HAMAP-Rule" id="MF_00185"/>
    </source>
</evidence>